<evidence type="ECO:0000255" key="1">
    <source>
        <dbReference type="HAMAP-Rule" id="MF_02002"/>
    </source>
</evidence>
<protein>
    <recommendedName>
        <fullName evidence="1">Isoleucine--tRNA ligase</fullName>
        <ecNumber evidence="1">6.1.1.5</ecNumber>
    </recommendedName>
    <alternativeName>
        <fullName evidence="1">Isoleucyl-tRNA synthetase</fullName>
        <shortName evidence="1">IleRS</shortName>
    </alternativeName>
</protein>
<proteinExistence type="inferred from homology"/>
<sequence>MPSQDYKDTLNLADTPFAMRANLAKREPDWLAAWEADDVYGKIRQARAGATKYILHDGPPYANGQIHLGHAVNKVLKDIIVKSKTLSGFDAPYVPGWDCHGLPIEQKVEAKHGKVGQKVSATEFRGLCREYARTQIELQKADFKRLGVFGDWDNPYLTMNFHQEANIVRALAKIYDNGHVTRGMKPVNWCLDCSSALAEAEVEYQDKVSDAIYVSFDIVDSGKVAALAEIDGNIAAVIWTTTPWTLPANQAIALHSEHNYSVVATENGNLLLATDLVESALSEFKLENKGVLATVLGRELEGLHAQHPLIEARQVPLILGDHVTTDSGTGLVHTAPGHGLDDYIVGLKYNLPVENPVSGTGVYLESAAVFAGEHIYKANPQIIAALHENGHLIRHTKIEHSYPHCWRHKSPIIFRATPQWFISMETKGLRERALADIPTVQWTPAWGQNRIESMMTGRPDWCISRQRTWGVPITFFTHKETGELHPNTLELMETAAQRIHEGGVEAWFDASCEDFLGAEAADYDKATDTLDVWFDSGTTHFAVLDQRDELTNPADMYLEGSDQHRGWFQTSLLTSEAMYERPPFKQVLTHGFVVDENGRKMSKSLGNIITPQEEINKTGADMLRLWIASSDYRYEMSAGKTVFKGSIDMYRRIRNTLRFLLANTDDFDPATNSVDINELVSLDKFIIERAQTVQAQIISAYDAMDFHQVTQHITAFCSQDLGSFYLDIIKDRQYTTQTDGQPRRSAQTAIYHIVQALIRWITPILSFTAQEAWEVLHGADSYVFTEEWYTFPEFELSAISNDDWQRIMLAKDMVNKHIETARGEKIINANLSADVNLYADGAMHESLAKLGEELRFVLITSNATLKPLSTVPAHSASTDEQTDSNSTGVVDLVVEVHAATGTKCVRCWHIRDDIGTDSTHPELCARCATNVSGDGEVRHYA</sequence>
<feature type="chain" id="PRO_0000098451" description="Isoleucine--tRNA ligase">
    <location>
        <begin position="1"/>
        <end position="941"/>
    </location>
</feature>
<feature type="short sequence motif" description="'HIGH' region">
    <location>
        <begin position="60"/>
        <end position="70"/>
    </location>
</feature>
<feature type="short sequence motif" description="'KMSKS' region">
    <location>
        <begin position="600"/>
        <end position="604"/>
    </location>
</feature>
<feature type="binding site" evidence="1">
    <location>
        <position position="559"/>
    </location>
    <ligand>
        <name>L-isoleucyl-5'-AMP</name>
        <dbReference type="ChEBI" id="CHEBI:178002"/>
    </ligand>
</feature>
<feature type="binding site" evidence="1">
    <location>
        <position position="603"/>
    </location>
    <ligand>
        <name>ATP</name>
        <dbReference type="ChEBI" id="CHEBI:30616"/>
    </ligand>
</feature>
<feature type="binding site" evidence="1">
    <location>
        <position position="904"/>
    </location>
    <ligand>
        <name>Zn(2+)</name>
        <dbReference type="ChEBI" id="CHEBI:29105"/>
    </ligand>
</feature>
<feature type="binding site" evidence="1">
    <location>
        <position position="907"/>
    </location>
    <ligand>
        <name>Zn(2+)</name>
        <dbReference type="ChEBI" id="CHEBI:29105"/>
    </ligand>
</feature>
<feature type="binding site" evidence="1">
    <location>
        <position position="924"/>
    </location>
    <ligand>
        <name>Zn(2+)</name>
        <dbReference type="ChEBI" id="CHEBI:29105"/>
    </ligand>
</feature>
<feature type="binding site" evidence="1">
    <location>
        <position position="927"/>
    </location>
    <ligand>
        <name>Zn(2+)</name>
        <dbReference type="ChEBI" id="CHEBI:29105"/>
    </ligand>
</feature>
<name>SYI_PSYA2</name>
<organism>
    <name type="scientific">Psychrobacter arcticus (strain DSM 17307 / VKM B-2377 / 273-4)</name>
    <dbReference type="NCBI Taxonomy" id="259536"/>
    <lineage>
        <taxon>Bacteria</taxon>
        <taxon>Pseudomonadati</taxon>
        <taxon>Pseudomonadota</taxon>
        <taxon>Gammaproteobacteria</taxon>
        <taxon>Moraxellales</taxon>
        <taxon>Moraxellaceae</taxon>
        <taxon>Psychrobacter</taxon>
    </lineage>
</organism>
<reference key="1">
    <citation type="journal article" date="2010" name="Appl. Environ. Microbiol.">
        <title>The genome sequence of Psychrobacter arcticus 273-4, a psychroactive Siberian permafrost bacterium, reveals mechanisms for adaptation to low-temperature growth.</title>
        <authorList>
            <person name="Ayala-del-Rio H.L."/>
            <person name="Chain P.S."/>
            <person name="Grzymski J.J."/>
            <person name="Ponder M.A."/>
            <person name="Ivanova N."/>
            <person name="Bergholz P.W."/>
            <person name="Di Bartolo G."/>
            <person name="Hauser L."/>
            <person name="Land M."/>
            <person name="Bakermans C."/>
            <person name="Rodrigues D."/>
            <person name="Klappenbach J."/>
            <person name="Zarka D."/>
            <person name="Larimer F."/>
            <person name="Richardson P."/>
            <person name="Murray A."/>
            <person name="Thomashow M."/>
            <person name="Tiedje J.M."/>
        </authorList>
    </citation>
    <scope>NUCLEOTIDE SEQUENCE [LARGE SCALE GENOMIC DNA]</scope>
    <source>
        <strain>DSM 17307 / VKM B-2377 / 273-4</strain>
    </source>
</reference>
<gene>
    <name evidence="1" type="primary">ileS</name>
    <name type="ordered locus">Psyc_0364</name>
</gene>
<comment type="function">
    <text evidence="1">Catalyzes the attachment of isoleucine to tRNA(Ile). As IleRS can inadvertently accommodate and process structurally similar amino acids such as valine, to avoid such errors it has two additional distinct tRNA(Ile)-dependent editing activities. One activity is designated as 'pretransfer' editing and involves the hydrolysis of activated Val-AMP. The other activity is designated 'posttransfer' editing and involves deacylation of mischarged Val-tRNA(Ile).</text>
</comment>
<comment type="catalytic activity">
    <reaction evidence="1">
        <text>tRNA(Ile) + L-isoleucine + ATP = L-isoleucyl-tRNA(Ile) + AMP + diphosphate</text>
        <dbReference type="Rhea" id="RHEA:11060"/>
        <dbReference type="Rhea" id="RHEA-COMP:9666"/>
        <dbReference type="Rhea" id="RHEA-COMP:9695"/>
        <dbReference type="ChEBI" id="CHEBI:30616"/>
        <dbReference type="ChEBI" id="CHEBI:33019"/>
        <dbReference type="ChEBI" id="CHEBI:58045"/>
        <dbReference type="ChEBI" id="CHEBI:78442"/>
        <dbReference type="ChEBI" id="CHEBI:78528"/>
        <dbReference type="ChEBI" id="CHEBI:456215"/>
        <dbReference type="EC" id="6.1.1.5"/>
    </reaction>
</comment>
<comment type="cofactor">
    <cofactor evidence="1">
        <name>Zn(2+)</name>
        <dbReference type="ChEBI" id="CHEBI:29105"/>
    </cofactor>
    <text evidence="1">Binds 1 zinc ion per subunit.</text>
</comment>
<comment type="subunit">
    <text evidence="1">Monomer.</text>
</comment>
<comment type="subcellular location">
    <subcellularLocation>
        <location evidence="1">Cytoplasm</location>
    </subcellularLocation>
</comment>
<comment type="domain">
    <text evidence="1">IleRS has two distinct active sites: one for aminoacylation and one for editing. The misactivated valine is translocated from the active site to the editing site, which sterically excludes the correctly activated isoleucine. The single editing site contains two valyl binding pockets, one specific for each substrate (Val-AMP or Val-tRNA(Ile)).</text>
</comment>
<comment type="similarity">
    <text evidence="1">Belongs to the class-I aminoacyl-tRNA synthetase family. IleS type 1 subfamily.</text>
</comment>
<accession>Q4FUS5</accession>
<dbReference type="EC" id="6.1.1.5" evidence="1"/>
<dbReference type="EMBL" id="CP000082">
    <property type="protein sequence ID" value="AAZ18233.1"/>
    <property type="molecule type" value="Genomic_DNA"/>
</dbReference>
<dbReference type="SMR" id="Q4FUS5"/>
<dbReference type="STRING" id="259536.Psyc_0364"/>
<dbReference type="KEGG" id="par:Psyc_0364"/>
<dbReference type="eggNOG" id="COG0060">
    <property type="taxonomic scope" value="Bacteria"/>
</dbReference>
<dbReference type="HOGENOM" id="CLU_001493_7_0_6"/>
<dbReference type="Proteomes" id="UP000000546">
    <property type="component" value="Chromosome"/>
</dbReference>
<dbReference type="GO" id="GO:0005829">
    <property type="term" value="C:cytosol"/>
    <property type="evidence" value="ECO:0007669"/>
    <property type="project" value="TreeGrafter"/>
</dbReference>
<dbReference type="GO" id="GO:0002161">
    <property type="term" value="F:aminoacyl-tRNA deacylase activity"/>
    <property type="evidence" value="ECO:0007669"/>
    <property type="project" value="InterPro"/>
</dbReference>
<dbReference type="GO" id="GO:0005524">
    <property type="term" value="F:ATP binding"/>
    <property type="evidence" value="ECO:0007669"/>
    <property type="project" value="UniProtKB-UniRule"/>
</dbReference>
<dbReference type="GO" id="GO:0004822">
    <property type="term" value="F:isoleucine-tRNA ligase activity"/>
    <property type="evidence" value="ECO:0007669"/>
    <property type="project" value="UniProtKB-UniRule"/>
</dbReference>
<dbReference type="GO" id="GO:0000049">
    <property type="term" value="F:tRNA binding"/>
    <property type="evidence" value="ECO:0007669"/>
    <property type="project" value="InterPro"/>
</dbReference>
<dbReference type="GO" id="GO:0008270">
    <property type="term" value="F:zinc ion binding"/>
    <property type="evidence" value="ECO:0007669"/>
    <property type="project" value="UniProtKB-UniRule"/>
</dbReference>
<dbReference type="GO" id="GO:0006428">
    <property type="term" value="P:isoleucyl-tRNA aminoacylation"/>
    <property type="evidence" value="ECO:0007669"/>
    <property type="project" value="UniProtKB-UniRule"/>
</dbReference>
<dbReference type="CDD" id="cd07960">
    <property type="entry name" value="Anticodon_Ia_Ile_BEm"/>
    <property type="match status" value="1"/>
</dbReference>
<dbReference type="CDD" id="cd00818">
    <property type="entry name" value="IleRS_core"/>
    <property type="match status" value="1"/>
</dbReference>
<dbReference type="FunFam" id="1.10.730.20:FF:000001">
    <property type="entry name" value="Isoleucine--tRNA ligase"/>
    <property type="match status" value="1"/>
</dbReference>
<dbReference type="FunFam" id="3.40.50.620:FF:000042">
    <property type="entry name" value="Isoleucine--tRNA ligase"/>
    <property type="match status" value="1"/>
</dbReference>
<dbReference type="FunFam" id="3.40.50.620:FF:000048">
    <property type="entry name" value="Isoleucine--tRNA ligase"/>
    <property type="match status" value="1"/>
</dbReference>
<dbReference type="Gene3D" id="1.10.730.20">
    <property type="match status" value="1"/>
</dbReference>
<dbReference type="Gene3D" id="3.40.50.620">
    <property type="entry name" value="HUPs"/>
    <property type="match status" value="2"/>
</dbReference>
<dbReference type="HAMAP" id="MF_02002">
    <property type="entry name" value="Ile_tRNA_synth_type1"/>
    <property type="match status" value="1"/>
</dbReference>
<dbReference type="InterPro" id="IPR001412">
    <property type="entry name" value="aa-tRNA-synth_I_CS"/>
</dbReference>
<dbReference type="InterPro" id="IPR002300">
    <property type="entry name" value="aa-tRNA-synth_Ia"/>
</dbReference>
<dbReference type="InterPro" id="IPR033708">
    <property type="entry name" value="Anticodon_Ile_BEm"/>
</dbReference>
<dbReference type="InterPro" id="IPR002301">
    <property type="entry name" value="Ile-tRNA-ligase"/>
</dbReference>
<dbReference type="InterPro" id="IPR023585">
    <property type="entry name" value="Ile-tRNA-ligase_type1"/>
</dbReference>
<dbReference type="InterPro" id="IPR050081">
    <property type="entry name" value="Ile-tRNA_ligase"/>
</dbReference>
<dbReference type="InterPro" id="IPR013155">
    <property type="entry name" value="M/V/L/I-tRNA-synth_anticd-bd"/>
</dbReference>
<dbReference type="InterPro" id="IPR014729">
    <property type="entry name" value="Rossmann-like_a/b/a_fold"/>
</dbReference>
<dbReference type="InterPro" id="IPR009080">
    <property type="entry name" value="tRNAsynth_Ia_anticodon-bd"/>
</dbReference>
<dbReference type="InterPro" id="IPR009008">
    <property type="entry name" value="Val/Leu/Ile-tRNA-synth_edit"/>
</dbReference>
<dbReference type="InterPro" id="IPR010663">
    <property type="entry name" value="Znf_FPG/IleRS"/>
</dbReference>
<dbReference type="NCBIfam" id="TIGR00392">
    <property type="entry name" value="ileS"/>
    <property type="match status" value="1"/>
</dbReference>
<dbReference type="PANTHER" id="PTHR42765:SF1">
    <property type="entry name" value="ISOLEUCINE--TRNA LIGASE, MITOCHONDRIAL"/>
    <property type="match status" value="1"/>
</dbReference>
<dbReference type="PANTHER" id="PTHR42765">
    <property type="entry name" value="SOLEUCYL-TRNA SYNTHETASE"/>
    <property type="match status" value="1"/>
</dbReference>
<dbReference type="Pfam" id="PF08264">
    <property type="entry name" value="Anticodon_1"/>
    <property type="match status" value="1"/>
</dbReference>
<dbReference type="Pfam" id="PF00133">
    <property type="entry name" value="tRNA-synt_1"/>
    <property type="match status" value="1"/>
</dbReference>
<dbReference type="Pfam" id="PF06827">
    <property type="entry name" value="zf-FPG_IleRS"/>
    <property type="match status" value="1"/>
</dbReference>
<dbReference type="PRINTS" id="PR00984">
    <property type="entry name" value="TRNASYNTHILE"/>
</dbReference>
<dbReference type="SUPFAM" id="SSF47323">
    <property type="entry name" value="Anticodon-binding domain of a subclass of class I aminoacyl-tRNA synthetases"/>
    <property type="match status" value="1"/>
</dbReference>
<dbReference type="SUPFAM" id="SSF52374">
    <property type="entry name" value="Nucleotidylyl transferase"/>
    <property type="match status" value="1"/>
</dbReference>
<dbReference type="SUPFAM" id="SSF50677">
    <property type="entry name" value="ValRS/IleRS/LeuRS editing domain"/>
    <property type="match status" value="1"/>
</dbReference>
<dbReference type="PROSITE" id="PS00178">
    <property type="entry name" value="AA_TRNA_LIGASE_I"/>
    <property type="match status" value="1"/>
</dbReference>
<keyword id="KW-0030">Aminoacyl-tRNA synthetase</keyword>
<keyword id="KW-0067">ATP-binding</keyword>
<keyword id="KW-0963">Cytoplasm</keyword>
<keyword id="KW-0436">Ligase</keyword>
<keyword id="KW-0479">Metal-binding</keyword>
<keyword id="KW-0547">Nucleotide-binding</keyword>
<keyword id="KW-0648">Protein biosynthesis</keyword>
<keyword id="KW-1185">Reference proteome</keyword>
<keyword id="KW-0862">Zinc</keyword>